<comment type="similarity">
    <text evidence="1">Belongs to the UPF0509 family.</text>
</comment>
<evidence type="ECO:0000255" key="1">
    <source>
        <dbReference type="HAMAP-Rule" id="MF_01641"/>
    </source>
</evidence>
<protein>
    <recommendedName>
        <fullName evidence="1">UPF0509 protein YciZ</fullName>
    </recommendedName>
</protein>
<reference key="1">
    <citation type="submission" date="2007-11" db="EMBL/GenBank/DDBJ databases">
        <authorList>
            <consortium name="The Salmonella enterica serovar Paratyphi B Genome Sequencing Project"/>
            <person name="McClelland M."/>
            <person name="Sanderson E.K."/>
            <person name="Porwollik S."/>
            <person name="Spieth J."/>
            <person name="Clifton W.S."/>
            <person name="Fulton R."/>
            <person name="Cordes M."/>
            <person name="Wollam A."/>
            <person name="Shah N."/>
            <person name="Pepin K."/>
            <person name="Bhonagiri V."/>
            <person name="Nash W."/>
            <person name="Johnson M."/>
            <person name="Thiruvilangam P."/>
            <person name="Wilson R."/>
        </authorList>
    </citation>
    <scope>NUCLEOTIDE SEQUENCE [LARGE SCALE GENOMIC DNA]</scope>
    <source>
        <strain>ATCC BAA-1250 / SPB7</strain>
    </source>
</reference>
<organism>
    <name type="scientific">Salmonella paratyphi B (strain ATCC BAA-1250 / SPB7)</name>
    <dbReference type="NCBI Taxonomy" id="1016998"/>
    <lineage>
        <taxon>Bacteria</taxon>
        <taxon>Pseudomonadati</taxon>
        <taxon>Pseudomonadota</taxon>
        <taxon>Gammaproteobacteria</taxon>
        <taxon>Enterobacterales</taxon>
        <taxon>Enterobacteriaceae</taxon>
        <taxon>Salmonella</taxon>
    </lineage>
</organism>
<name>YCIZ_SALPB</name>
<gene>
    <name evidence="1" type="primary">yciZ</name>
    <name type="ordered locus">SPAB_01549</name>
</gene>
<dbReference type="EMBL" id="CP000886">
    <property type="protein sequence ID" value="ABX66947.1"/>
    <property type="molecule type" value="Genomic_DNA"/>
</dbReference>
<dbReference type="RefSeq" id="WP_001279854.1">
    <property type="nucleotide sequence ID" value="NC_010102.1"/>
</dbReference>
<dbReference type="KEGG" id="spq:SPAB_01549"/>
<dbReference type="PATRIC" id="fig|1016998.12.peg.1455"/>
<dbReference type="HOGENOM" id="CLU_180697_1_0_6"/>
<dbReference type="BioCyc" id="SENT1016998:SPAB_RS06295-MONOMER"/>
<dbReference type="Proteomes" id="UP000008556">
    <property type="component" value="Chromosome"/>
</dbReference>
<dbReference type="HAMAP" id="MF_01641">
    <property type="entry name" value="UPF0509"/>
    <property type="match status" value="1"/>
</dbReference>
<dbReference type="InterPro" id="IPR020887">
    <property type="entry name" value="UPF0509"/>
</dbReference>
<dbReference type="NCBIfam" id="NF010179">
    <property type="entry name" value="PRK13658.1"/>
    <property type="match status" value="1"/>
</dbReference>
<dbReference type="Pfam" id="PF23675">
    <property type="entry name" value="YciZ"/>
    <property type="match status" value="1"/>
</dbReference>
<proteinExistence type="inferred from homology"/>
<sequence length="59" mass="6430">MSDIEAQRIAARIDTVLDILVAGDYHSAINNLEILRAELLDQVKDGISPSQAPGSPWEI</sequence>
<feature type="chain" id="PRO_1000088212" description="UPF0509 protein YciZ">
    <location>
        <begin position="1"/>
        <end position="59"/>
    </location>
</feature>
<accession>A9MWU4</accession>